<gene>
    <name evidence="1" type="primary">atpB</name>
    <name type="ordered locus">Aave_0366</name>
</gene>
<sequence length="292" mass="31563">MAAEAHAPTASEYIVHHLQHLQNIKQKSIVDFSVVNIDSVVVGLVLGAIALFAFWLCARKATSGVPGRFQAAVEILVEMVDNQAKANIHNAESRKFIAPLALTVFVWIFLMNAMDMLPVDLLPAIWAQIYGAAGHDPHHAYLRVVPTADLSTTLGLSTAVLVLCLYYSVKIKGLGGWAHELVTAPFGTSKNPVFALILGVVNLLMQIIEYVAKTVSHGMRLFGNMYAGELVFMLIALMGGAAAMSLSGVLLPVGHIIAGSIWAIFHILVITLQAFIFMMLALIYLGQAHEAH</sequence>
<protein>
    <recommendedName>
        <fullName evidence="1">ATP synthase subunit a</fullName>
    </recommendedName>
    <alternativeName>
        <fullName evidence="1">ATP synthase F0 sector subunit a</fullName>
    </alternativeName>
    <alternativeName>
        <fullName evidence="1">F-ATPase subunit 6</fullName>
    </alternativeName>
</protein>
<keyword id="KW-0066">ATP synthesis</keyword>
<keyword id="KW-0997">Cell inner membrane</keyword>
<keyword id="KW-1003">Cell membrane</keyword>
<keyword id="KW-0138">CF(0)</keyword>
<keyword id="KW-0375">Hydrogen ion transport</keyword>
<keyword id="KW-0406">Ion transport</keyword>
<keyword id="KW-0472">Membrane</keyword>
<keyword id="KW-0812">Transmembrane</keyword>
<keyword id="KW-1133">Transmembrane helix</keyword>
<keyword id="KW-0813">Transport</keyword>
<dbReference type="EMBL" id="CP000512">
    <property type="protein sequence ID" value="ABM30973.1"/>
    <property type="molecule type" value="Genomic_DNA"/>
</dbReference>
<dbReference type="RefSeq" id="WP_011793550.1">
    <property type="nucleotide sequence ID" value="NC_008752.1"/>
</dbReference>
<dbReference type="SMR" id="A1TJ35"/>
<dbReference type="STRING" id="397945.Aave_0366"/>
<dbReference type="GeneID" id="79790174"/>
<dbReference type="KEGG" id="aav:Aave_0366"/>
<dbReference type="eggNOG" id="COG0356">
    <property type="taxonomic scope" value="Bacteria"/>
</dbReference>
<dbReference type="HOGENOM" id="CLU_041018_1_0_4"/>
<dbReference type="OrthoDB" id="9789241at2"/>
<dbReference type="Proteomes" id="UP000002596">
    <property type="component" value="Chromosome"/>
</dbReference>
<dbReference type="GO" id="GO:0005886">
    <property type="term" value="C:plasma membrane"/>
    <property type="evidence" value="ECO:0007669"/>
    <property type="project" value="UniProtKB-SubCell"/>
</dbReference>
<dbReference type="GO" id="GO:0045259">
    <property type="term" value="C:proton-transporting ATP synthase complex"/>
    <property type="evidence" value="ECO:0007669"/>
    <property type="project" value="UniProtKB-KW"/>
</dbReference>
<dbReference type="GO" id="GO:0046933">
    <property type="term" value="F:proton-transporting ATP synthase activity, rotational mechanism"/>
    <property type="evidence" value="ECO:0007669"/>
    <property type="project" value="UniProtKB-UniRule"/>
</dbReference>
<dbReference type="GO" id="GO:0042777">
    <property type="term" value="P:proton motive force-driven plasma membrane ATP synthesis"/>
    <property type="evidence" value="ECO:0007669"/>
    <property type="project" value="TreeGrafter"/>
</dbReference>
<dbReference type="CDD" id="cd00310">
    <property type="entry name" value="ATP-synt_Fo_a_6"/>
    <property type="match status" value="1"/>
</dbReference>
<dbReference type="FunFam" id="1.20.120.220:FF:000002">
    <property type="entry name" value="ATP synthase subunit a"/>
    <property type="match status" value="1"/>
</dbReference>
<dbReference type="Gene3D" id="1.20.120.220">
    <property type="entry name" value="ATP synthase, F0 complex, subunit A"/>
    <property type="match status" value="1"/>
</dbReference>
<dbReference type="HAMAP" id="MF_01393">
    <property type="entry name" value="ATP_synth_a_bact"/>
    <property type="match status" value="1"/>
</dbReference>
<dbReference type="InterPro" id="IPR045082">
    <property type="entry name" value="ATP_syn_F0_a_bact/chloroplast"/>
</dbReference>
<dbReference type="InterPro" id="IPR000568">
    <property type="entry name" value="ATP_synth_F0_asu"/>
</dbReference>
<dbReference type="InterPro" id="IPR023011">
    <property type="entry name" value="ATP_synth_F0_asu_AS"/>
</dbReference>
<dbReference type="InterPro" id="IPR035908">
    <property type="entry name" value="F0_ATP_A_sf"/>
</dbReference>
<dbReference type="NCBIfam" id="TIGR01131">
    <property type="entry name" value="ATP_synt_6_or_A"/>
    <property type="match status" value="1"/>
</dbReference>
<dbReference type="NCBIfam" id="NF004477">
    <property type="entry name" value="PRK05815.1-1"/>
    <property type="match status" value="1"/>
</dbReference>
<dbReference type="PANTHER" id="PTHR42823">
    <property type="entry name" value="ATP SYNTHASE SUBUNIT A, CHLOROPLASTIC"/>
    <property type="match status" value="1"/>
</dbReference>
<dbReference type="PANTHER" id="PTHR42823:SF3">
    <property type="entry name" value="ATP SYNTHASE SUBUNIT A, CHLOROPLASTIC"/>
    <property type="match status" value="1"/>
</dbReference>
<dbReference type="Pfam" id="PF00119">
    <property type="entry name" value="ATP-synt_A"/>
    <property type="match status" value="1"/>
</dbReference>
<dbReference type="SUPFAM" id="SSF81336">
    <property type="entry name" value="F1F0 ATP synthase subunit A"/>
    <property type="match status" value="1"/>
</dbReference>
<dbReference type="PROSITE" id="PS00449">
    <property type="entry name" value="ATPASE_A"/>
    <property type="match status" value="1"/>
</dbReference>
<comment type="function">
    <text evidence="1">Key component of the proton channel; it plays a direct role in the translocation of protons across the membrane.</text>
</comment>
<comment type="subunit">
    <text evidence="1">F-type ATPases have 2 components, CF(1) - the catalytic core - and CF(0) - the membrane proton channel. CF(1) has five subunits: alpha(3), beta(3), gamma(1), delta(1), epsilon(1). CF(0) has three main subunits: a(1), b(2) and c(9-12). The alpha and beta chains form an alternating ring which encloses part of the gamma chain. CF(1) is attached to CF(0) by a central stalk formed by the gamma and epsilon chains, while a peripheral stalk is formed by the delta and b chains.</text>
</comment>
<comment type="subcellular location">
    <subcellularLocation>
        <location evidence="1">Cell inner membrane</location>
        <topology evidence="1">Multi-pass membrane protein</topology>
    </subcellularLocation>
</comment>
<comment type="similarity">
    <text evidence="1">Belongs to the ATPase A chain family.</text>
</comment>
<feature type="chain" id="PRO_1000145250" description="ATP synthase subunit a">
    <location>
        <begin position="1"/>
        <end position="292"/>
    </location>
</feature>
<feature type="transmembrane region" description="Helical" evidence="1">
    <location>
        <begin position="37"/>
        <end position="57"/>
    </location>
</feature>
<feature type="transmembrane region" description="Helical" evidence="1">
    <location>
        <begin position="96"/>
        <end position="116"/>
    </location>
</feature>
<feature type="transmembrane region" description="Helical" evidence="1">
    <location>
        <begin position="144"/>
        <end position="164"/>
    </location>
</feature>
<feature type="transmembrane region" description="Helical" evidence="1">
    <location>
        <begin position="192"/>
        <end position="212"/>
    </location>
</feature>
<feature type="transmembrane region" description="Helical" evidence="1">
    <location>
        <begin position="230"/>
        <end position="250"/>
    </location>
</feature>
<feature type="transmembrane region" description="Helical" evidence="1">
    <location>
        <begin position="263"/>
        <end position="283"/>
    </location>
</feature>
<name>ATP6_PARC0</name>
<reference key="1">
    <citation type="submission" date="2006-12" db="EMBL/GenBank/DDBJ databases">
        <title>Complete sequence of Acidovorax avenae subsp. citrulli AAC00-1.</title>
        <authorList>
            <person name="Copeland A."/>
            <person name="Lucas S."/>
            <person name="Lapidus A."/>
            <person name="Barry K."/>
            <person name="Detter J.C."/>
            <person name="Glavina del Rio T."/>
            <person name="Dalin E."/>
            <person name="Tice H."/>
            <person name="Pitluck S."/>
            <person name="Kiss H."/>
            <person name="Brettin T."/>
            <person name="Bruce D."/>
            <person name="Han C."/>
            <person name="Tapia R."/>
            <person name="Gilna P."/>
            <person name="Schmutz J."/>
            <person name="Larimer F."/>
            <person name="Land M."/>
            <person name="Hauser L."/>
            <person name="Kyrpides N."/>
            <person name="Kim E."/>
            <person name="Stahl D."/>
            <person name="Richardson P."/>
        </authorList>
    </citation>
    <scope>NUCLEOTIDE SEQUENCE [LARGE SCALE GENOMIC DNA]</scope>
    <source>
        <strain>AAC00-1</strain>
    </source>
</reference>
<evidence type="ECO:0000255" key="1">
    <source>
        <dbReference type="HAMAP-Rule" id="MF_01393"/>
    </source>
</evidence>
<proteinExistence type="inferred from homology"/>
<accession>A1TJ35</accession>
<organism>
    <name type="scientific">Paracidovorax citrulli (strain AAC00-1)</name>
    <name type="common">Acidovorax citrulli</name>
    <dbReference type="NCBI Taxonomy" id="397945"/>
    <lineage>
        <taxon>Bacteria</taxon>
        <taxon>Pseudomonadati</taxon>
        <taxon>Pseudomonadota</taxon>
        <taxon>Betaproteobacteria</taxon>
        <taxon>Burkholderiales</taxon>
        <taxon>Comamonadaceae</taxon>
        <taxon>Paracidovorax</taxon>
    </lineage>
</organism>